<comment type="similarity">
    <text evidence="1">Belongs to the DNA glycosylase MPG family.</text>
</comment>
<accession>Q4JYA4</accession>
<evidence type="ECO:0000255" key="1">
    <source>
        <dbReference type="HAMAP-Rule" id="MF_00527"/>
    </source>
</evidence>
<name>3MGH_CORJK</name>
<organism>
    <name type="scientific">Corynebacterium jeikeium (strain K411)</name>
    <dbReference type="NCBI Taxonomy" id="306537"/>
    <lineage>
        <taxon>Bacteria</taxon>
        <taxon>Bacillati</taxon>
        <taxon>Actinomycetota</taxon>
        <taxon>Actinomycetes</taxon>
        <taxon>Mycobacteriales</taxon>
        <taxon>Corynebacteriaceae</taxon>
        <taxon>Corynebacterium</taxon>
    </lineage>
</organism>
<gene>
    <name type="ordered locus">jk0054</name>
</gene>
<proteinExistence type="inferred from homology"/>
<feature type="chain" id="PRO_0000265012" description="Putative 3-methyladenine DNA glycosylase">
    <location>
        <begin position="1"/>
        <end position="213"/>
    </location>
</feature>
<sequence length="213" mass="22220">MDRSAQRIDFTQPADVVAPLLLGAVLRHGGVAIELTEVEAYLGTADEASHAFNGPTPRCEVMFGPPQHLYVYASYGIHRAGNLVCSPDGEAGGVLLRAGKIIEGLDIARARRGSKPADEALARGPGNLGAALGLNLDLNGSAVDQVFSGAGDSSPTSAPFTLTPRTAIPEITRGKRIGISKNADALLRFWVPGDRSVSSPRGRQLGTPLRASS</sequence>
<protein>
    <recommendedName>
        <fullName evidence="1">Putative 3-methyladenine DNA glycosylase</fullName>
        <ecNumber evidence="1">3.2.2.-</ecNumber>
    </recommendedName>
</protein>
<dbReference type="EC" id="3.2.2.-" evidence="1"/>
<dbReference type="EMBL" id="CR931997">
    <property type="protein sequence ID" value="CAI36203.1"/>
    <property type="molecule type" value="Genomic_DNA"/>
</dbReference>
<dbReference type="RefSeq" id="WP_011272812.1">
    <property type="nucleotide sequence ID" value="NC_007164.1"/>
</dbReference>
<dbReference type="SMR" id="Q4JYA4"/>
<dbReference type="STRING" id="306537.jk0054"/>
<dbReference type="KEGG" id="cjk:jk0054"/>
<dbReference type="PATRIC" id="fig|306537.10.peg.65"/>
<dbReference type="eggNOG" id="COG2094">
    <property type="taxonomic scope" value="Bacteria"/>
</dbReference>
<dbReference type="HOGENOM" id="CLU_060471_3_0_11"/>
<dbReference type="OrthoDB" id="9794313at2"/>
<dbReference type="Proteomes" id="UP000000545">
    <property type="component" value="Chromosome"/>
</dbReference>
<dbReference type="GO" id="GO:0003905">
    <property type="term" value="F:alkylbase DNA N-glycosylase activity"/>
    <property type="evidence" value="ECO:0007669"/>
    <property type="project" value="InterPro"/>
</dbReference>
<dbReference type="GO" id="GO:0003677">
    <property type="term" value="F:DNA binding"/>
    <property type="evidence" value="ECO:0007669"/>
    <property type="project" value="InterPro"/>
</dbReference>
<dbReference type="GO" id="GO:0006284">
    <property type="term" value="P:base-excision repair"/>
    <property type="evidence" value="ECO:0007669"/>
    <property type="project" value="InterPro"/>
</dbReference>
<dbReference type="CDD" id="cd00540">
    <property type="entry name" value="AAG"/>
    <property type="match status" value="1"/>
</dbReference>
<dbReference type="Gene3D" id="3.10.300.10">
    <property type="entry name" value="Methylpurine-DNA glycosylase (MPG)"/>
    <property type="match status" value="1"/>
</dbReference>
<dbReference type="HAMAP" id="MF_00527">
    <property type="entry name" value="3MGH"/>
    <property type="match status" value="1"/>
</dbReference>
<dbReference type="InterPro" id="IPR011034">
    <property type="entry name" value="Formyl_transferase-like_C_sf"/>
</dbReference>
<dbReference type="InterPro" id="IPR003180">
    <property type="entry name" value="MPG"/>
</dbReference>
<dbReference type="InterPro" id="IPR036995">
    <property type="entry name" value="MPG_sf"/>
</dbReference>
<dbReference type="NCBIfam" id="TIGR00567">
    <property type="entry name" value="3mg"/>
    <property type="match status" value="1"/>
</dbReference>
<dbReference type="NCBIfam" id="NF002003">
    <property type="entry name" value="PRK00802.1-3"/>
    <property type="match status" value="1"/>
</dbReference>
<dbReference type="PANTHER" id="PTHR10429">
    <property type="entry name" value="DNA-3-METHYLADENINE GLYCOSYLASE"/>
    <property type="match status" value="1"/>
</dbReference>
<dbReference type="PANTHER" id="PTHR10429:SF0">
    <property type="entry name" value="DNA-3-METHYLADENINE GLYCOSYLASE"/>
    <property type="match status" value="1"/>
</dbReference>
<dbReference type="Pfam" id="PF02245">
    <property type="entry name" value="Pur_DNA_glyco"/>
    <property type="match status" value="1"/>
</dbReference>
<dbReference type="SUPFAM" id="SSF50486">
    <property type="entry name" value="FMT C-terminal domain-like"/>
    <property type="match status" value="1"/>
</dbReference>
<keyword id="KW-0227">DNA damage</keyword>
<keyword id="KW-0234">DNA repair</keyword>
<keyword id="KW-0378">Hydrolase</keyword>
<keyword id="KW-1185">Reference proteome</keyword>
<reference key="1">
    <citation type="journal article" date="2005" name="J. Bacteriol.">
        <title>Complete genome sequence and analysis of the multiresistant nosocomial pathogen Corynebacterium jeikeium K411, a lipid-requiring bacterium of the human skin flora.</title>
        <authorList>
            <person name="Tauch A."/>
            <person name="Kaiser O."/>
            <person name="Hain T."/>
            <person name="Goesmann A."/>
            <person name="Weisshaar B."/>
            <person name="Albersmeier A."/>
            <person name="Bekel T."/>
            <person name="Bischoff N."/>
            <person name="Brune I."/>
            <person name="Chakraborty T."/>
            <person name="Kalinowski J."/>
            <person name="Meyer F."/>
            <person name="Rupp O."/>
            <person name="Schneiker S."/>
            <person name="Viehoever P."/>
            <person name="Puehler A."/>
        </authorList>
    </citation>
    <scope>NUCLEOTIDE SEQUENCE [LARGE SCALE GENOMIC DNA]</scope>
    <source>
        <strain>K411</strain>
    </source>
</reference>